<dbReference type="EMBL" id="AB240139">
    <property type="protein sequence ID" value="BAE48031.1"/>
    <property type="molecule type" value="Genomic_DNA"/>
</dbReference>
<dbReference type="RefSeq" id="YP_398892.1">
    <property type="nucleotide sequence ID" value="NC_007602.1"/>
</dbReference>
<dbReference type="SMR" id="Q33C04"/>
<dbReference type="GeneID" id="3776285"/>
<dbReference type="KEGG" id="nto:3776285"/>
<dbReference type="OrthoDB" id="1860403at2759"/>
<dbReference type="GO" id="GO:0009535">
    <property type="term" value="C:chloroplast thylakoid membrane"/>
    <property type="evidence" value="ECO:0007669"/>
    <property type="project" value="UniProtKB-SubCell"/>
</dbReference>
<dbReference type="GO" id="GO:0015979">
    <property type="term" value="P:photosynthesis"/>
    <property type="evidence" value="ECO:0007669"/>
    <property type="project" value="InterPro"/>
</dbReference>
<dbReference type="HAMAP" id="MF_00293">
    <property type="entry name" value="PSII_PsbN"/>
    <property type="match status" value="1"/>
</dbReference>
<dbReference type="InterPro" id="IPR003398">
    <property type="entry name" value="PSII_PsbN"/>
</dbReference>
<dbReference type="PANTHER" id="PTHR35326">
    <property type="entry name" value="PROTEIN PSBN"/>
    <property type="match status" value="1"/>
</dbReference>
<dbReference type="PANTHER" id="PTHR35326:SF3">
    <property type="entry name" value="PROTEIN PSBN"/>
    <property type="match status" value="1"/>
</dbReference>
<dbReference type="Pfam" id="PF02468">
    <property type="entry name" value="PsbN"/>
    <property type="match status" value="1"/>
</dbReference>
<geneLocation type="chloroplast"/>
<evidence type="ECO:0000255" key="1">
    <source>
        <dbReference type="HAMAP-Rule" id="MF_00293"/>
    </source>
</evidence>
<protein>
    <recommendedName>
        <fullName evidence="1">Protein PsbN</fullName>
    </recommendedName>
</protein>
<gene>
    <name evidence="1" type="primary">psbN</name>
</gene>
<proteinExistence type="inferred from homology"/>
<comment type="function">
    <text evidence="1">May play a role in photosystem I and II biogenesis.</text>
</comment>
<comment type="subcellular location">
    <subcellularLocation>
        <location evidence="1">Plastid</location>
        <location evidence="1">Chloroplast thylakoid membrane</location>
        <topology evidence="1">Single-pass membrane protein</topology>
    </subcellularLocation>
</comment>
<comment type="similarity">
    <text evidence="1">Belongs to the PsbN family.</text>
</comment>
<comment type="caution">
    <text evidence="1">Originally thought to be a component of PSII; based on experiments in Synechocystis, N.tabacum and barley, and its absence from PSII in T.elongatus and T.vulcanus, this is probably not true.</text>
</comment>
<organism>
    <name type="scientific">Nicotiana tomentosiformis</name>
    <name type="common">Tobacco</name>
    <dbReference type="NCBI Taxonomy" id="4098"/>
    <lineage>
        <taxon>Eukaryota</taxon>
        <taxon>Viridiplantae</taxon>
        <taxon>Streptophyta</taxon>
        <taxon>Embryophyta</taxon>
        <taxon>Tracheophyta</taxon>
        <taxon>Spermatophyta</taxon>
        <taxon>Magnoliopsida</taxon>
        <taxon>eudicotyledons</taxon>
        <taxon>Gunneridae</taxon>
        <taxon>Pentapetalae</taxon>
        <taxon>asterids</taxon>
        <taxon>lamiids</taxon>
        <taxon>Solanales</taxon>
        <taxon>Solanaceae</taxon>
        <taxon>Nicotianoideae</taxon>
        <taxon>Nicotianeae</taxon>
        <taxon>Nicotiana</taxon>
    </lineage>
</organism>
<name>PSBN_NICTO</name>
<keyword id="KW-0150">Chloroplast</keyword>
<keyword id="KW-0472">Membrane</keyword>
<keyword id="KW-0934">Plastid</keyword>
<keyword id="KW-0793">Thylakoid</keyword>
<keyword id="KW-0812">Transmembrane</keyword>
<keyword id="KW-1133">Transmembrane helix</keyword>
<reference key="1">
    <citation type="journal article" date="2006" name="Mol. Genet. Genomics">
        <title>The chloroplast genome of Nicotiana sylvestris and Nicotiana tomentosiformis: complete sequencing confirms that the Nicotiana sylvestris progenitor is the maternal genome donor of Nicotiana tabacum.</title>
        <authorList>
            <person name="Yukawa M."/>
            <person name="Tsudzuki T."/>
            <person name="Sugiura M."/>
        </authorList>
    </citation>
    <scope>NUCLEOTIDE SEQUENCE [LARGE SCALE GENOMIC DNA]</scope>
</reference>
<sequence length="43" mass="4722">METATLVAIFISGLLVSFTGYALYTAFGQPSQQLRDPFEEHGD</sequence>
<accession>Q33C04</accession>
<feature type="chain" id="PRO_0000232776" description="Protein PsbN">
    <location>
        <begin position="1"/>
        <end position="43"/>
    </location>
</feature>
<feature type="transmembrane region" description="Helical" evidence="1">
    <location>
        <begin position="7"/>
        <end position="27"/>
    </location>
</feature>